<keyword id="KW-0051">Antiviral defense</keyword>
<keyword id="KW-0343">GTPase activation</keyword>
<keyword id="KW-1267">Proteomics identification</keyword>
<keyword id="KW-1185">Reference proteome</keyword>
<evidence type="ECO:0000255" key="1">
    <source>
        <dbReference type="PROSITE-ProRule" id="PRU00664"/>
    </source>
</evidence>
<evidence type="ECO:0000269" key="2">
    <source>
    </source>
</evidence>
<evidence type="ECO:0000269" key="3">
    <source>
    </source>
</evidence>
<evidence type="ECO:0000269" key="4">
    <source>
    </source>
</evidence>
<comment type="function">
    <text evidence="3 4">Acts as a GTPase-activating protein (GAP) toward guanine nucleotide exchange factors like ARL2, ARL3, ARF1 and ARF6, but not for GTPases outside the Arf family. Regulates IFN-related antiviral responses.</text>
</comment>
<comment type="tissue specificity">
    <text evidence="2 3">Alveolar cells (morphologically type II cells) and alveolar macrophages (at protein level). Expressed in brain, colon, heart, kidney, liver, lung, muscle, placenta, small intestine, spleen, stomach and testis. In lung it is expressed in alveolar macrophages and alveolar walls.</text>
</comment>
<dbReference type="EMBL" id="AK312800">
    <property type="protein sequence ID" value="BAG35659.1"/>
    <property type="molecule type" value="mRNA"/>
</dbReference>
<dbReference type="EMBL" id="CH471056">
    <property type="protein sequence ID" value="EAX05096.1"/>
    <property type="molecule type" value="Genomic_DNA"/>
</dbReference>
<dbReference type="EMBL" id="CH471056">
    <property type="protein sequence ID" value="EAX05097.1"/>
    <property type="molecule type" value="Genomic_DNA"/>
</dbReference>
<dbReference type="EMBL" id="BC015168">
    <property type="protein sequence ID" value="AAH15168.2"/>
    <property type="molecule type" value="mRNA"/>
</dbReference>
<dbReference type="CCDS" id="CCDS3752.1"/>
<dbReference type="RefSeq" id="NP_714913.1">
    <property type="nucleotide sequence ID" value="NM_153702.4"/>
</dbReference>
<dbReference type="RefSeq" id="XP_005262943.1">
    <property type="nucleotide sequence ID" value="XM_005262886.2"/>
</dbReference>
<dbReference type="RefSeq" id="XP_011530121.1">
    <property type="nucleotide sequence ID" value="XM_011531819.3"/>
</dbReference>
<dbReference type="RefSeq" id="XP_054205517.1">
    <property type="nucleotide sequence ID" value="XM_054349542.1"/>
</dbReference>
<dbReference type="SMR" id="Q8IZ81"/>
<dbReference type="BioGRID" id="129109">
    <property type="interactions" value="19"/>
</dbReference>
<dbReference type="FunCoup" id="Q8IZ81">
    <property type="interactions" value="823"/>
</dbReference>
<dbReference type="IntAct" id="Q8IZ81">
    <property type="interactions" value="8"/>
</dbReference>
<dbReference type="MINT" id="Q8IZ81"/>
<dbReference type="STRING" id="9606.ENSP00000326342"/>
<dbReference type="GlyGen" id="Q8IZ81">
    <property type="glycosylation" value="3 sites, 1 O-linked glycan (3 sites)"/>
</dbReference>
<dbReference type="iPTMnet" id="Q8IZ81"/>
<dbReference type="PhosphoSitePlus" id="Q8IZ81"/>
<dbReference type="SwissPalm" id="Q8IZ81"/>
<dbReference type="BioMuta" id="ELMOD2"/>
<dbReference type="DMDM" id="74728441"/>
<dbReference type="jPOST" id="Q8IZ81"/>
<dbReference type="MassIVE" id="Q8IZ81"/>
<dbReference type="PaxDb" id="9606-ENSP00000326342"/>
<dbReference type="PeptideAtlas" id="Q8IZ81"/>
<dbReference type="ProteomicsDB" id="71286"/>
<dbReference type="Pumba" id="Q8IZ81"/>
<dbReference type="Antibodypedia" id="45421">
    <property type="antibodies" value="157 antibodies from 23 providers"/>
</dbReference>
<dbReference type="DNASU" id="255520"/>
<dbReference type="Ensembl" id="ENST00000323570.8">
    <property type="protein sequence ID" value="ENSP00000326342.3"/>
    <property type="gene ID" value="ENSG00000179387.10"/>
</dbReference>
<dbReference type="GeneID" id="255520"/>
<dbReference type="KEGG" id="hsa:255520"/>
<dbReference type="MANE-Select" id="ENST00000323570.8">
    <property type="protein sequence ID" value="ENSP00000326342.3"/>
    <property type="RefSeq nucleotide sequence ID" value="NM_153702.4"/>
    <property type="RefSeq protein sequence ID" value="NP_714913.1"/>
</dbReference>
<dbReference type="UCSC" id="uc003iik.3">
    <property type="organism name" value="human"/>
</dbReference>
<dbReference type="AGR" id="HGNC:28111"/>
<dbReference type="CTD" id="255520"/>
<dbReference type="DisGeNET" id="255520"/>
<dbReference type="GeneCards" id="ELMOD2"/>
<dbReference type="HGNC" id="HGNC:28111">
    <property type="gene designation" value="ELMOD2"/>
</dbReference>
<dbReference type="HPA" id="ENSG00000179387">
    <property type="expression patterns" value="Low tissue specificity"/>
</dbReference>
<dbReference type="MalaCards" id="ELMOD2"/>
<dbReference type="MIM" id="610196">
    <property type="type" value="gene"/>
</dbReference>
<dbReference type="neXtProt" id="NX_Q8IZ81"/>
<dbReference type="OpenTargets" id="ENSG00000179387"/>
<dbReference type="PharmGKB" id="PA134984145"/>
<dbReference type="VEuPathDB" id="HostDB:ENSG00000179387"/>
<dbReference type="eggNOG" id="KOG2998">
    <property type="taxonomic scope" value="Eukaryota"/>
</dbReference>
<dbReference type="GeneTree" id="ENSGT00940000156589"/>
<dbReference type="HOGENOM" id="CLU_056289_0_0_1"/>
<dbReference type="InParanoid" id="Q8IZ81"/>
<dbReference type="OMA" id="WMKWILR"/>
<dbReference type="OrthoDB" id="67155at2759"/>
<dbReference type="PAN-GO" id="Q8IZ81">
    <property type="GO annotations" value="1 GO annotation based on evolutionary models"/>
</dbReference>
<dbReference type="PhylomeDB" id="Q8IZ81"/>
<dbReference type="TreeFam" id="TF323472"/>
<dbReference type="PathwayCommons" id="Q8IZ81"/>
<dbReference type="SignaLink" id="Q8IZ81"/>
<dbReference type="BioGRID-ORCS" id="255520">
    <property type="hits" value="17 hits in 1117 CRISPR screens"/>
</dbReference>
<dbReference type="ChiTaRS" id="ELMOD2">
    <property type="organism name" value="human"/>
</dbReference>
<dbReference type="GenomeRNAi" id="255520"/>
<dbReference type="Pharos" id="Q8IZ81">
    <property type="development level" value="Tbio"/>
</dbReference>
<dbReference type="PRO" id="PR:Q8IZ81"/>
<dbReference type="Proteomes" id="UP000005640">
    <property type="component" value="Chromosome 4"/>
</dbReference>
<dbReference type="RNAct" id="Q8IZ81">
    <property type="molecule type" value="protein"/>
</dbReference>
<dbReference type="Bgee" id="ENSG00000179387">
    <property type="expression patterns" value="Expressed in adrenal tissue and 197 other cell types or tissues"/>
</dbReference>
<dbReference type="ExpressionAtlas" id="Q8IZ81">
    <property type="expression patterns" value="baseline and differential"/>
</dbReference>
<dbReference type="GO" id="GO:0016020">
    <property type="term" value="C:membrane"/>
    <property type="evidence" value="ECO:0007005"/>
    <property type="project" value="UniProtKB"/>
</dbReference>
<dbReference type="GO" id="GO:0005096">
    <property type="term" value="F:GTPase activator activity"/>
    <property type="evidence" value="ECO:0000314"/>
    <property type="project" value="UniProtKB"/>
</dbReference>
<dbReference type="GO" id="GO:0051607">
    <property type="term" value="P:defense response to virus"/>
    <property type="evidence" value="ECO:0007669"/>
    <property type="project" value="UniProtKB-KW"/>
</dbReference>
<dbReference type="GO" id="GO:0050688">
    <property type="term" value="P:regulation of defense response to virus"/>
    <property type="evidence" value="ECO:0000314"/>
    <property type="project" value="UniProtKB"/>
</dbReference>
<dbReference type="InterPro" id="IPR006816">
    <property type="entry name" value="ELMO_dom"/>
</dbReference>
<dbReference type="InterPro" id="IPR050868">
    <property type="entry name" value="ELMO_domain-containing"/>
</dbReference>
<dbReference type="PANTHER" id="PTHR12771:SF47">
    <property type="entry name" value="ELMO DOMAIN-CONTAINING PROTEIN 2"/>
    <property type="match status" value="1"/>
</dbReference>
<dbReference type="PANTHER" id="PTHR12771">
    <property type="entry name" value="ENGULFMENT AND CELL MOTILITY"/>
    <property type="match status" value="1"/>
</dbReference>
<dbReference type="Pfam" id="PF04727">
    <property type="entry name" value="ELMO_CED12"/>
    <property type="match status" value="1"/>
</dbReference>
<dbReference type="PROSITE" id="PS51335">
    <property type="entry name" value="ELMO"/>
    <property type="match status" value="1"/>
</dbReference>
<proteinExistence type="evidence at protein level"/>
<name>ELMD2_HUMAN</name>
<organism>
    <name type="scientific">Homo sapiens</name>
    <name type="common">Human</name>
    <dbReference type="NCBI Taxonomy" id="9606"/>
    <lineage>
        <taxon>Eukaryota</taxon>
        <taxon>Metazoa</taxon>
        <taxon>Chordata</taxon>
        <taxon>Craniata</taxon>
        <taxon>Vertebrata</taxon>
        <taxon>Euteleostomi</taxon>
        <taxon>Mammalia</taxon>
        <taxon>Eutheria</taxon>
        <taxon>Euarchontoglires</taxon>
        <taxon>Primates</taxon>
        <taxon>Haplorrhini</taxon>
        <taxon>Catarrhini</taxon>
        <taxon>Hominidae</taxon>
        <taxon>Homo</taxon>
    </lineage>
</organism>
<reference key="1">
    <citation type="journal article" date="2004" name="Nat. Genet.">
        <title>Complete sequencing and characterization of 21,243 full-length human cDNAs.</title>
        <authorList>
            <person name="Ota T."/>
            <person name="Suzuki Y."/>
            <person name="Nishikawa T."/>
            <person name="Otsuki T."/>
            <person name="Sugiyama T."/>
            <person name="Irie R."/>
            <person name="Wakamatsu A."/>
            <person name="Hayashi K."/>
            <person name="Sato H."/>
            <person name="Nagai K."/>
            <person name="Kimura K."/>
            <person name="Makita H."/>
            <person name="Sekine M."/>
            <person name="Obayashi M."/>
            <person name="Nishi T."/>
            <person name="Shibahara T."/>
            <person name="Tanaka T."/>
            <person name="Ishii S."/>
            <person name="Yamamoto J."/>
            <person name="Saito K."/>
            <person name="Kawai Y."/>
            <person name="Isono Y."/>
            <person name="Nakamura Y."/>
            <person name="Nagahari K."/>
            <person name="Murakami K."/>
            <person name="Yasuda T."/>
            <person name="Iwayanagi T."/>
            <person name="Wagatsuma M."/>
            <person name="Shiratori A."/>
            <person name="Sudo H."/>
            <person name="Hosoiri T."/>
            <person name="Kaku Y."/>
            <person name="Kodaira H."/>
            <person name="Kondo H."/>
            <person name="Sugawara M."/>
            <person name="Takahashi M."/>
            <person name="Kanda K."/>
            <person name="Yokoi T."/>
            <person name="Furuya T."/>
            <person name="Kikkawa E."/>
            <person name="Omura Y."/>
            <person name="Abe K."/>
            <person name="Kamihara K."/>
            <person name="Katsuta N."/>
            <person name="Sato K."/>
            <person name="Tanikawa M."/>
            <person name="Yamazaki M."/>
            <person name="Ninomiya K."/>
            <person name="Ishibashi T."/>
            <person name="Yamashita H."/>
            <person name="Murakawa K."/>
            <person name="Fujimori K."/>
            <person name="Tanai H."/>
            <person name="Kimata M."/>
            <person name="Watanabe M."/>
            <person name="Hiraoka S."/>
            <person name="Chiba Y."/>
            <person name="Ishida S."/>
            <person name="Ono Y."/>
            <person name="Takiguchi S."/>
            <person name="Watanabe S."/>
            <person name="Yosida M."/>
            <person name="Hotuta T."/>
            <person name="Kusano J."/>
            <person name="Kanehori K."/>
            <person name="Takahashi-Fujii A."/>
            <person name="Hara H."/>
            <person name="Tanase T.-O."/>
            <person name="Nomura Y."/>
            <person name="Togiya S."/>
            <person name="Komai F."/>
            <person name="Hara R."/>
            <person name="Takeuchi K."/>
            <person name="Arita M."/>
            <person name="Imose N."/>
            <person name="Musashino K."/>
            <person name="Yuuki H."/>
            <person name="Oshima A."/>
            <person name="Sasaki N."/>
            <person name="Aotsuka S."/>
            <person name="Yoshikawa Y."/>
            <person name="Matsunawa H."/>
            <person name="Ichihara T."/>
            <person name="Shiohata N."/>
            <person name="Sano S."/>
            <person name="Moriya S."/>
            <person name="Momiyama H."/>
            <person name="Satoh N."/>
            <person name="Takami S."/>
            <person name="Terashima Y."/>
            <person name="Suzuki O."/>
            <person name="Nakagawa S."/>
            <person name="Senoh A."/>
            <person name="Mizoguchi H."/>
            <person name="Goto Y."/>
            <person name="Shimizu F."/>
            <person name="Wakebe H."/>
            <person name="Hishigaki H."/>
            <person name="Watanabe T."/>
            <person name="Sugiyama A."/>
            <person name="Takemoto M."/>
            <person name="Kawakami B."/>
            <person name="Yamazaki M."/>
            <person name="Watanabe K."/>
            <person name="Kumagai A."/>
            <person name="Itakura S."/>
            <person name="Fukuzumi Y."/>
            <person name="Fujimori Y."/>
            <person name="Komiyama M."/>
            <person name="Tashiro H."/>
            <person name="Tanigami A."/>
            <person name="Fujiwara T."/>
            <person name="Ono T."/>
            <person name="Yamada K."/>
            <person name="Fujii Y."/>
            <person name="Ozaki K."/>
            <person name="Hirao M."/>
            <person name="Ohmori Y."/>
            <person name="Kawabata A."/>
            <person name="Hikiji T."/>
            <person name="Kobatake N."/>
            <person name="Inagaki H."/>
            <person name="Ikema Y."/>
            <person name="Okamoto S."/>
            <person name="Okitani R."/>
            <person name="Kawakami T."/>
            <person name="Noguchi S."/>
            <person name="Itoh T."/>
            <person name="Shigeta K."/>
            <person name="Senba T."/>
            <person name="Matsumura K."/>
            <person name="Nakajima Y."/>
            <person name="Mizuno T."/>
            <person name="Morinaga M."/>
            <person name="Sasaki M."/>
            <person name="Togashi T."/>
            <person name="Oyama M."/>
            <person name="Hata H."/>
            <person name="Watanabe M."/>
            <person name="Komatsu T."/>
            <person name="Mizushima-Sugano J."/>
            <person name="Satoh T."/>
            <person name="Shirai Y."/>
            <person name="Takahashi Y."/>
            <person name="Nakagawa K."/>
            <person name="Okumura K."/>
            <person name="Nagase T."/>
            <person name="Nomura N."/>
            <person name="Kikuchi H."/>
            <person name="Masuho Y."/>
            <person name="Yamashita R."/>
            <person name="Nakai K."/>
            <person name="Yada T."/>
            <person name="Nakamura Y."/>
            <person name="Ohara O."/>
            <person name="Isogai T."/>
            <person name="Sugano S."/>
        </authorList>
    </citation>
    <scope>NUCLEOTIDE SEQUENCE [LARGE SCALE MRNA]</scope>
    <source>
        <tissue>Testis</tissue>
    </source>
</reference>
<reference key="2">
    <citation type="submission" date="2005-09" db="EMBL/GenBank/DDBJ databases">
        <authorList>
            <person name="Mural R.J."/>
            <person name="Istrail S."/>
            <person name="Sutton G.G."/>
            <person name="Florea L."/>
            <person name="Halpern A.L."/>
            <person name="Mobarry C.M."/>
            <person name="Lippert R."/>
            <person name="Walenz B."/>
            <person name="Shatkay H."/>
            <person name="Dew I."/>
            <person name="Miller J.R."/>
            <person name="Flanigan M.J."/>
            <person name="Edwards N.J."/>
            <person name="Bolanos R."/>
            <person name="Fasulo D."/>
            <person name="Halldorsson B.V."/>
            <person name="Hannenhalli S."/>
            <person name="Turner R."/>
            <person name="Yooseph S."/>
            <person name="Lu F."/>
            <person name="Nusskern D.R."/>
            <person name="Shue B.C."/>
            <person name="Zheng X.H."/>
            <person name="Zhong F."/>
            <person name="Delcher A.L."/>
            <person name="Huson D.H."/>
            <person name="Kravitz S.A."/>
            <person name="Mouchard L."/>
            <person name="Reinert K."/>
            <person name="Remington K.A."/>
            <person name="Clark A.G."/>
            <person name="Waterman M.S."/>
            <person name="Eichler E.E."/>
            <person name="Adams M.D."/>
            <person name="Hunkapiller M.W."/>
            <person name="Myers E.W."/>
            <person name="Venter J.C."/>
        </authorList>
    </citation>
    <scope>NUCLEOTIDE SEQUENCE [LARGE SCALE GENOMIC DNA]</scope>
</reference>
<reference key="3">
    <citation type="journal article" date="2004" name="Genome Res.">
        <title>The status, quality, and expansion of the NIH full-length cDNA project: the Mammalian Gene Collection (MGC).</title>
        <authorList>
            <consortium name="The MGC Project Team"/>
        </authorList>
    </citation>
    <scope>NUCLEOTIDE SEQUENCE [LARGE SCALE MRNA]</scope>
    <source>
        <tissue>Pancreas</tissue>
    </source>
</reference>
<reference key="4">
    <citation type="journal article" date="2006" name="Am. J. Hum. Genet.">
        <title>ELMOD2 is a candidate gene for familial idiopathic pulmonary fibrosis.</title>
        <authorList>
            <person name="Hodgson U."/>
            <person name="Pulkkinen V."/>
            <person name="Dixon M."/>
            <person name="Peyrard-Janvid M."/>
            <person name="Rehn M."/>
            <person name="Lahermo P."/>
            <person name="Ollikainen V."/>
            <person name="Salmenkivi K."/>
            <person name="Kinnula V."/>
            <person name="Kere J."/>
            <person name="Tukiainen P."/>
            <person name="Laitinen T."/>
        </authorList>
    </citation>
    <scope>TISSUE SPECIFICITY</scope>
</reference>
<reference key="5">
    <citation type="journal article" date="2007" name="J. Biol. Chem.">
        <title>ELMOD2 is an Arl2 GTPase-activating protein that also acts on Arfs.</title>
        <authorList>
            <person name="Bowzard J.B."/>
            <person name="Cheng D."/>
            <person name="Peng J."/>
            <person name="Kahn R.A."/>
        </authorList>
    </citation>
    <scope>FUNCTION</scope>
    <scope>TISSUE SPECIFICITY</scope>
    <scope>IDENTIFICATION BY MASS SPECTROMETRY</scope>
</reference>
<reference key="6">
    <citation type="journal article" date="2010" name="FASEB J.">
        <title>ELMOD2, a candidate gene for idiopathic pulmonary fibrosis, regulates antiviral responses.</title>
        <authorList>
            <person name="Pulkkinen V."/>
            <person name="Bruce S."/>
            <person name="Rintahaka J."/>
            <person name="Hodgson U."/>
            <person name="Laitinen T."/>
            <person name="Alenius H."/>
            <person name="Kinnula V.L."/>
            <person name="Myllaerniemi M."/>
            <person name="Matikainen S."/>
            <person name="Kere J."/>
        </authorList>
    </citation>
    <scope>FUNCTION</scope>
</reference>
<reference key="7">
    <citation type="journal article" date="2011" name="BMC Syst. Biol.">
        <title>Initial characterization of the human central proteome.</title>
        <authorList>
            <person name="Burkard T.R."/>
            <person name="Planyavsky M."/>
            <person name="Kaupe I."/>
            <person name="Breitwieser F.P."/>
            <person name="Buerckstuemmer T."/>
            <person name="Bennett K.L."/>
            <person name="Superti-Furga G."/>
            <person name="Colinge J."/>
        </authorList>
    </citation>
    <scope>IDENTIFICATION BY MASS SPECTROMETRY [LARGE SCALE ANALYSIS]</scope>
</reference>
<feature type="chain" id="PRO_0000225017" description="ELMO domain-containing protein 2">
    <location>
        <begin position="1"/>
        <end position="293"/>
    </location>
</feature>
<feature type="domain" description="ELMO" evidence="1">
    <location>
        <begin position="126"/>
        <end position="282"/>
    </location>
</feature>
<accession>Q8IZ81</accession>
<accession>B2R712</accession>
<accession>D3DNZ0</accession>
<protein>
    <recommendedName>
        <fullName>ELMO domain-containing protein 2</fullName>
    </recommendedName>
</protein>
<gene>
    <name type="primary">ELMOD2</name>
</gene>
<sequence length="293" mass="34961">MFISLWEFFYGHFFRFWMKWLLRQMTGKCELQRIFDTYVGAQRTHRIENSLTYSKNKVLQKATHVVQSEVDKYVDDIMKEKNINPEKDASFKICMKMCLLQITGYKQLYLDVESVRKRPYDSDNLQHEELLMKLWNLLMPTKKLNARISKQWAEIGFQGDDPKTDFRGMGILGLINLVYFSENYTSEAHQILSRSNHPKLGYSYAIVGINLTEMAYSLLKSEALKFHLYNLVPGIPTMEHFHQFYCYLVYEFDKFWFEEEPESIMYFNLYREKFHEKIKGLLLDCNVALTLKV</sequence>